<protein>
    <recommendedName>
        <fullName evidence="1">Large ribosomal subunit protein uL23</fullName>
    </recommendedName>
    <alternativeName>
        <fullName evidence="2">50S ribosomal protein L23</fullName>
    </alternativeName>
</protein>
<comment type="function">
    <text evidence="1">Binds to 23S rRNA. One of the proteins that surrounds the polypeptide exit tunnel on the outside of the ribosome.</text>
</comment>
<comment type="subunit">
    <text evidence="1">Part of the 50S ribosomal subunit. Contacts protein L29.</text>
</comment>
<comment type="similarity">
    <text evidence="1">Belongs to the universal ribosomal protein uL23 family.</text>
</comment>
<comment type="sequence caution" evidence="2">
    <conflict type="erroneous initiation">
        <sequence resource="EMBL-CDS" id="AAB84524"/>
    </conflict>
    <text>Extended N-terminus.</text>
</comment>
<organism>
    <name type="scientific">Methanothermobacter thermautotrophicus (strain ATCC 29096 / DSM 1053 / JCM 10044 / NBRC 100330 / Delta H)</name>
    <name type="common">Methanobacterium thermoautotrophicum</name>
    <dbReference type="NCBI Taxonomy" id="187420"/>
    <lineage>
        <taxon>Archaea</taxon>
        <taxon>Methanobacteriati</taxon>
        <taxon>Methanobacteriota</taxon>
        <taxon>Methanomada group</taxon>
        <taxon>Methanobacteria</taxon>
        <taxon>Methanobacteriales</taxon>
        <taxon>Methanobacteriaceae</taxon>
        <taxon>Methanothermobacter</taxon>
    </lineage>
</organism>
<dbReference type="EMBL" id="AE000666">
    <property type="protein sequence ID" value="AAB84524.1"/>
    <property type="status" value="ALT_INIT"/>
    <property type="molecule type" value="Genomic_DNA"/>
</dbReference>
<dbReference type="PIR" id="H69151">
    <property type="entry name" value="H69151"/>
</dbReference>
<dbReference type="RefSeq" id="WP_048060727.1">
    <property type="nucleotide sequence ID" value="NC_000916.1"/>
</dbReference>
<dbReference type="SMR" id="O26112"/>
<dbReference type="FunCoup" id="O26112">
    <property type="interactions" value="144"/>
</dbReference>
<dbReference type="STRING" id="187420.MTH_4"/>
<dbReference type="PaxDb" id="187420-MTH_4"/>
<dbReference type="EnsemblBacteria" id="AAB84524">
    <property type="protein sequence ID" value="AAB84524"/>
    <property type="gene ID" value="MTH_4"/>
</dbReference>
<dbReference type="KEGG" id="mth:MTH_4"/>
<dbReference type="PATRIC" id="fig|187420.15.peg.4"/>
<dbReference type="HOGENOM" id="CLU_037562_4_2_2"/>
<dbReference type="InParanoid" id="O26112"/>
<dbReference type="Proteomes" id="UP000005223">
    <property type="component" value="Chromosome"/>
</dbReference>
<dbReference type="GO" id="GO:1990904">
    <property type="term" value="C:ribonucleoprotein complex"/>
    <property type="evidence" value="ECO:0007669"/>
    <property type="project" value="UniProtKB-KW"/>
</dbReference>
<dbReference type="GO" id="GO:0005840">
    <property type="term" value="C:ribosome"/>
    <property type="evidence" value="ECO:0007669"/>
    <property type="project" value="UniProtKB-KW"/>
</dbReference>
<dbReference type="GO" id="GO:0019843">
    <property type="term" value="F:rRNA binding"/>
    <property type="evidence" value="ECO:0007669"/>
    <property type="project" value="UniProtKB-UniRule"/>
</dbReference>
<dbReference type="GO" id="GO:0003735">
    <property type="term" value="F:structural constituent of ribosome"/>
    <property type="evidence" value="ECO:0007669"/>
    <property type="project" value="InterPro"/>
</dbReference>
<dbReference type="GO" id="GO:0006412">
    <property type="term" value="P:translation"/>
    <property type="evidence" value="ECO:0007669"/>
    <property type="project" value="UniProtKB-UniRule"/>
</dbReference>
<dbReference type="FunFam" id="3.30.70.330:FF:000532">
    <property type="entry name" value="50S ribosomal protein L23"/>
    <property type="match status" value="1"/>
</dbReference>
<dbReference type="Gene3D" id="3.30.70.330">
    <property type="match status" value="1"/>
</dbReference>
<dbReference type="HAMAP" id="MF_01369_A">
    <property type="entry name" value="Ribosomal_uL23_A"/>
    <property type="match status" value="1"/>
</dbReference>
<dbReference type="InterPro" id="IPR012677">
    <property type="entry name" value="Nucleotide-bd_a/b_plait_sf"/>
</dbReference>
<dbReference type="InterPro" id="IPR019985">
    <property type="entry name" value="Ribosomal_uL23"/>
</dbReference>
<dbReference type="InterPro" id="IPR013025">
    <property type="entry name" value="Ribosomal_uL23-like"/>
</dbReference>
<dbReference type="InterPro" id="IPR012678">
    <property type="entry name" value="Ribosomal_uL23/eL15/eS24_sf"/>
</dbReference>
<dbReference type="NCBIfam" id="NF011118">
    <property type="entry name" value="PRK14548.1"/>
    <property type="match status" value="1"/>
</dbReference>
<dbReference type="NCBIfam" id="TIGR03636">
    <property type="entry name" value="uL23_arch"/>
    <property type="match status" value="1"/>
</dbReference>
<dbReference type="PANTHER" id="PTHR11620">
    <property type="entry name" value="60S RIBOSOMAL PROTEIN L23A"/>
    <property type="match status" value="1"/>
</dbReference>
<dbReference type="Pfam" id="PF00276">
    <property type="entry name" value="Ribosomal_L23"/>
    <property type="match status" value="1"/>
</dbReference>
<dbReference type="SUPFAM" id="SSF54189">
    <property type="entry name" value="Ribosomal proteins S24e, L23 and L15e"/>
    <property type="match status" value="1"/>
</dbReference>
<sequence length="86" mass="9862">MDPYAVIMKPHVTEKSMNLIDQNNELAFVVMRKSTKKDVRRAFEELFAVKVERVNTQVTPRGQKIAYIKLAKEHSAEDIAVKLGVF</sequence>
<evidence type="ECO:0000255" key="1">
    <source>
        <dbReference type="HAMAP-Rule" id="MF_01369"/>
    </source>
</evidence>
<evidence type="ECO:0000305" key="2"/>
<keyword id="KW-1185">Reference proteome</keyword>
<keyword id="KW-0687">Ribonucleoprotein</keyword>
<keyword id="KW-0689">Ribosomal protein</keyword>
<keyword id="KW-0694">RNA-binding</keyword>
<keyword id="KW-0699">rRNA-binding</keyword>
<gene>
    <name evidence="1" type="primary">rpl23</name>
    <name type="ordered locus">MTH_4</name>
</gene>
<accession>O26112</accession>
<proteinExistence type="inferred from homology"/>
<name>RL23_METTH</name>
<feature type="chain" id="PRO_0000129438" description="Large ribosomal subunit protein uL23">
    <location>
        <begin position="1"/>
        <end position="86"/>
    </location>
</feature>
<reference key="1">
    <citation type="journal article" date="1997" name="J. Bacteriol.">
        <title>Complete genome sequence of Methanobacterium thermoautotrophicum deltaH: functional analysis and comparative genomics.</title>
        <authorList>
            <person name="Smith D.R."/>
            <person name="Doucette-Stamm L.A."/>
            <person name="Deloughery C."/>
            <person name="Lee H.-M."/>
            <person name="Dubois J."/>
            <person name="Aldredge T."/>
            <person name="Bashirzadeh R."/>
            <person name="Blakely D."/>
            <person name="Cook R."/>
            <person name="Gilbert K."/>
            <person name="Harrison D."/>
            <person name="Hoang L."/>
            <person name="Keagle P."/>
            <person name="Lumm W."/>
            <person name="Pothier B."/>
            <person name="Qiu D."/>
            <person name="Spadafora R."/>
            <person name="Vicare R."/>
            <person name="Wang Y."/>
            <person name="Wierzbowski J."/>
            <person name="Gibson R."/>
            <person name="Jiwani N."/>
            <person name="Caruso A."/>
            <person name="Bush D."/>
            <person name="Safer H."/>
            <person name="Patwell D."/>
            <person name="Prabhakar S."/>
            <person name="McDougall S."/>
            <person name="Shimer G."/>
            <person name="Goyal A."/>
            <person name="Pietrovski S."/>
            <person name="Church G.M."/>
            <person name="Daniels C.J."/>
            <person name="Mao J.-I."/>
            <person name="Rice P."/>
            <person name="Noelling J."/>
            <person name="Reeve J.N."/>
        </authorList>
    </citation>
    <scope>NUCLEOTIDE SEQUENCE [LARGE SCALE GENOMIC DNA]</scope>
    <source>
        <strain>ATCC 29096 / DSM 1053 / JCM 10044 / NBRC 100330 / Delta H</strain>
    </source>
</reference>